<reference key="1">
    <citation type="journal article" date="1994" name="Nature">
        <title>Complete DNA sequence of yeast chromosome XI.</title>
        <authorList>
            <person name="Dujon B."/>
            <person name="Alexandraki D."/>
            <person name="Andre B."/>
            <person name="Ansorge W."/>
            <person name="Baladron V."/>
            <person name="Ballesta J.P.G."/>
            <person name="Banrevi A."/>
            <person name="Bolle P.-A."/>
            <person name="Bolotin-Fukuhara M."/>
            <person name="Bossier P."/>
            <person name="Bou G."/>
            <person name="Boyer J."/>
            <person name="Buitrago M.J."/>
            <person name="Cheret G."/>
            <person name="Colleaux L."/>
            <person name="Daignan-Fornier B."/>
            <person name="del Rey F."/>
            <person name="Dion C."/>
            <person name="Domdey H."/>
            <person name="Duesterhoeft A."/>
            <person name="Duesterhus S."/>
            <person name="Entian K.-D."/>
            <person name="Erfle H."/>
            <person name="Esteban P.F."/>
            <person name="Feldmann H."/>
            <person name="Fernandes L."/>
            <person name="Fobo G.M."/>
            <person name="Fritz C."/>
            <person name="Fukuhara H."/>
            <person name="Gabel C."/>
            <person name="Gaillon L."/>
            <person name="Garcia-Cantalejo J.M."/>
            <person name="Garcia-Ramirez J.J."/>
            <person name="Gent M.E."/>
            <person name="Ghazvini M."/>
            <person name="Goffeau A."/>
            <person name="Gonzalez A."/>
            <person name="Grothues D."/>
            <person name="Guerreiro P."/>
            <person name="Hegemann J.H."/>
            <person name="Hewitt N."/>
            <person name="Hilger F."/>
            <person name="Hollenberg C.P."/>
            <person name="Horaitis O."/>
            <person name="Indge K.J."/>
            <person name="Jacquier A."/>
            <person name="James C.M."/>
            <person name="Jauniaux J.-C."/>
            <person name="Jimenez A."/>
            <person name="Keuchel H."/>
            <person name="Kirchrath L."/>
            <person name="Kleine K."/>
            <person name="Koetter P."/>
            <person name="Legrain P."/>
            <person name="Liebl S."/>
            <person name="Louis E.J."/>
            <person name="Maia e Silva A."/>
            <person name="Marck C."/>
            <person name="Monnier A.-L."/>
            <person name="Moestl D."/>
            <person name="Mueller S."/>
            <person name="Obermaier B."/>
            <person name="Oliver S.G."/>
            <person name="Pallier C."/>
            <person name="Pascolo S."/>
            <person name="Pfeiffer F."/>
            <person name="Philippsen P."/>
            <person name="Planta R.J."/>
            <person name="Pohl F.M."/>
            <person name="Pohl T.M."/>
            <person name="Poehlmann R."/>
            <person name="Portetelle D."/>
            <person name="Purnelle B."/>
            <person name="Puzos V."/>
            <person name="Ramezani Rad M."/>
            <person name="Rasmussen S.W."/>
            <person name="Remacha M.A."/>
            <person name="Revuelta J.L."/>
            <person name="Richard G.-F."/>
            <person name="Rieger M."/>
            <person name="Rodrigues-Pousada C."/>
            <person name="Rose M."/>
            <person name="Rupp T."/>
            <person name="Santos M.A."/>
            <person name="Schwager C."/>
            <person name="Sensen C."/>
            <person name="Skala J."/>
            <person name="Soares H."/>
            <person name="Sor F."/>
            <person name="Stegemann J."/>
            <person name="Tettelin H."/>
            <person name="Thierry A."/>
            <person name="Tzermia M."/>
            <person name="Urrestarazu L.A."/>
            <person name="van Dyck L."/>
            <person name="van Vliet-Reedijk J.C."/>
            <person name="Valens M."/>
            <person name="Vandenbol M."/>
            <person name="Vilela C."/>
            <person name="Vissers S."/>
            <person name="von Wettstein D."/>
            <person name="Voss H."/>
            <person name="Wiemann S."/>
            <person name="Xu G."/>
            <person name="Zimmermann J."/>
            <person name="Haasemann M."/>
            <person name="Becker I."/>
            <person name="Mewes H.-W."/>
        </authorList>
    </citation>
    <scope>NUCLEOTIDE SEQUENCE [LARGE SCALE GENOMIC DNA]</scope>
    <source>
        <strain>ATCC 204508 / S288c</strain>
    </source>
</reference>
<reference key="2">
    <citation type="journal article" date="2014" name="G3 (Bethesda)">
        <title>The reference genome sequence of Saccharomyces cerevisiae: Then and now.</title>
        <authorList>
            <person name="Engel S.R."/>
            <person name="Dietrich F.S."/>
            <person name="Fisk D.G."/>
            <person name="Binkley G."/>
            <person name="Balakrishnan R."/>
            <person name="Costanzo M.C."/>
            <person name="Dwight S.S."/>
            <person name="Hitz B.C."/>
            <person name="Karra K."/>
            <person name="Nash R.S."/>
            <person name="Weng S."/>
            <person name="Wong E.D."/>
            <person name="Lloyd P."/>
            <person name="Skrzypek M.S."/>
            <person name="Miyasato S.R."/>
            <person name="Simison M."/>
            <person name="Cherry J.M."/>
        </authorList>
    </citation>
    <scope>GENOME REANNOTATION</scope>
    <source>
        <strain>ATCC 204508 / S288c</strain>
    </source>
</reference>
<reference key="3">
    <citation type="journal article" date="2007" name="Genome Res.">
        <title>Approaching a complete repository of sequence-verified protein-encoding clones for Saccharomyces cerevisiae.</title>
        <authorList>
            <person name="Hu Y."/>
            <person name="Rolfs A."/>
            <person name="Bhullar B."/>
            <person name="Murthy T.V.S."/>
            <person name="Zhu C."/>
            <person name="Berger M.F."/>
            <person name="Camargo A.A."/>
            <person name="Kelley F."/>
            <person name="McCarron S."/>
            <person name="Jepson D."/>
            <person name="Richardson A."/>
            <person name="Raphael J."/>
            <person name="Moreira D."/>
            <person name="Taycher E."/>
            <person name="Zuo D."/>
            <person name="Mohr S."/>
            <person name="Kane M.F."/>
            <person name="Williamson J."/>
            <person name="Simpson A.J.G."/>
            <person name="Bulyk M.L."/>
            <person name="Harlow E."/>
            <person name="Marsischky G."/>
            <person name="Kolodner R.D."/>
            <person name="LaBaer J."/>
        </authorList>
    </citation>
    <scope>NUCLEOTIDE SEQUENCE [GENOMIC DNA]</scope>
    <source>
        <strain>ATCC 204508 / S288c</strain>
    </source>
</reference>
<name>YKU2_YEAST</name>
<gene>
    <name type="ordered locus">YKL202W</name>
</gene>
<keyword id="KW-0677">Repeat</keyword>
<evidence type="ECO:0000305" key="1"/>
<evidence type="ECO:0000305" key="2">
    <source>
    </source>
</evidence>
<accession>P36042</accession>
<dbReference type="EMBL" id="Z28201">
    <property type="protein sequence ID" value="CAA82045.1"/>
    <property type="molecule type" value="Genomic_DNA"/>
</dbReference>
<dbReference type="EMBL" id="AY558558">
    <property type="protein sequence ID" value="AAS56884.1"/>
    <property type="molecule type" value="Genomic_DNA"/>
</dbReference>
<dbReference type="PIR" id="S38039">
    <property type="entry name" value="S38039"/>
</dbReference>
<dbReference type="MINT" id="P36042"/>
<dbReference type="PaxDb" id="4932-YKL202W"/>
<dbReference type="EnsemblFungi" id="YKL202W_mRNA">
    <property type="protein sequence ID" value="YKL202W"/>
    <property type="gene ID" value="YKL202W"/>
</dbReference>
<dbReference type="AGR" id="SGD:S000001685"/>
<dbReference type="SGD" id="S000001685">
    <property type="gene designation" value="YKL202W"/>
</dbReference>
<dbReference type="HOGENOM" id="CLU_1409820_0_0_1"/>
<comment type="miscellaneous">
    <text evidence="1">Partially overlaps MNN4.</text>
</comment>
<comment type="caution">
    <text evidence="2">Product of a dubious gene prediction unlikely to encode a functional protein. Because of that it is not part of the S.cerevisiae S288c complete/reference proteome set.</text>
</comment>
<proteinExistence type="uncertain"/>
<sequence length="193" mass="21237">MQQYVKNDGNKYIIQMHRGKAIEMKRFMNFQSGSPTFNCCAPPPASFFPLLRSSSFLPLPASSFLHLHSSCFSLPASFFPLLRSSSFLHLHSSYFLHLHSSSFLLLPASSSLLLPSSFSPLPPASSFLLLPSFSSLLLPSFSSLPLPSFSFLLLPSSSFPLLPSSSSPLPPSSSSPSAFFLQVTWHKHSPRIQ</sequence>
<organism>
    <name type="scientific">Saccharomyces cerevisiae (strain ATCC 204508 / S288c)</name>
    <name type="common">Baker's yeast</name>
    <dbReference type="NCBI Taxonomy" id="559292"/>
    <lineage>
        <taxon>Eukaryota</taxon>
        <taxon>Fungi</taxon>
        <taxon>Dikarya</taxon>
        <taxon>Ascomycota</taxon>
        <taxon>Saccharomycotina</taxon>
        <taxon>Saccharomycetes</taxon>
        <taxon>Saccharomycetales</taxon>
        <taxon>Saccharomycetaceae</taxon>
        <taxon>Saccharomyces</taxon>
    </lineage>
</organism>
<protein>
    <recommendedName>
        <fullName>Putative uncharacterized protein YKL202W</fullName>
    </recommendedName>
</protein>
<feature type="chain" id="PRO_0000203134" description="Putative uncharacterized protein YKL202W">
    <location>
        <begin position="1"/>
        <end position="193"/>
    </location>
</feature>